<proteinExistence type="evidence at protein level"/>
<evidence type="ECO:0000255" key="1">
    <source>
        <dbReference type="HAMAP-Rule" id="MF_03187"/>
    </source>
</evidence>
<evidence type="ECO:0000269" key="2">
    <source>
    </source>
</evidence>
<evidence type="ECO:0000269" key="3">
    <source>
    </source>
</evidence>
<evidence type="ECO:0000269" key="4">
    <source>
    </source>
</evidence>
<evidence type="ECO:0000269" key="5">
    <source>
    </source>
</evidence>
<evidence type="ECO:0000303" key="6">
    <source>
    </source>
</evidence>
<evidence type="ECO:0000303" key="7">
    <source>
    </source>
</evidence>
<evidence type="ECO:0000305" key="8"/>
<evidence type="ECO:0000305" key="9">
    <source>
    </source>
</evidence>
<evidence type="ECO:0000305" key="10">
    <source>
    </source>
</evidence>
<evidence type="ECO:0000305" key="11">
    <source>
    </source>
</evidence>
<evidence type="ECO:0000312" key="12">
    <source>
        <dbReference type="SGD" id="S000003233"/>
    </source>
</evidence>
<protein>
    <recommendedName>
        <fullName evidence="1 11">Protein-lysine N-methyltransferase EFM5</fullName>
        <ecNumber evidence="1 11">2.1.1.-</ecNumber>
    </recommendedName>
    <alternativeName>
        <fullName evidence="1 7">Elongation factor methyltransferase 5</fullName>
    </alternativeName>
    <alternativeName>
        <fullName evidence="9">N(6)-adenine-specific DNA methyltransferase-like 1</fullName>
    </alternativeName>
</protein>
<keyword id="KW-0963">Cytoplasm</keyword>
<keyword id="KW-0489">Methyltransferase</keyword>
<keyword id="KW-1185">Reference proteome</keyword>
<keyword id="KW-0808">Transferase</keyword>
<organism>
    <name type="scientific">Saccharomyces cerevisiae (strain ATCC 204508 / S288c)</name>
    <name type="common">Baker's yeast</name>
    <dbReference type="NCBI Taxonomy" id="559292"/>
    <lineage>
        <taxon>Eukaryota</taxon>
        <taxon>Fungi</taxon>
        <taxon>Dikarya</taxon>
        <taxon>Ascomycota</taxon>
        <taxon>Saccharomycotina</taxon>
        <taxon>Saccharomycetes</taxon>
        <taxon>Saccharomycetales</taxon>
        <taxon>Saccharomycetaceae</taxon>
        <taxon>Saccharomyces</taxon>
    </lineage>
</organism>
<sequence length="248" mass="28582">MSDSDSDSDYELTLSANALAALEEFKREEQQHQEAFQKLYDETDEDFQKKKKEEGMKLFKEDWQLSQFWYSDDTAAILADAILEGADENTVIAIVSAPSVYAAIQKKPTNEIPTEHIYLFEFDKRFELLAGRDHFFFYDYNKPLDFSDEIKGKVDRLLIDPPFLNEDCQTKSSITAKCLLAPNDNSKTKKGVFKHRLISCTGERMSEVISKVYSDTRITTFLPEHSNGLSNEFRCYANFECSSWKFAS</sequence>
<dbReference type="EC" id="2.1.1.-" evidence="1 11"/>
<dbReference type="EMBL" id="Z72786">
    <property type="protein sequence ID" value="CAA96984.1"/>
    <property type="status" value="ALT_SEQ"/>
    <property type="molecule type" value="Genomic_DNA"/>
</dbReference>
<dbReference type="EMBL" id="BK006941">
    <property type="protein sequence ID" value="DAA08099.1"/>
    <property type="molecule type" value="Genomic_DNA"/>
</dbReference>
<dbReference type="PIR" id="S64290">
    <property type="entry name" value="S64290"/>
</dbReference>
<dbReference type="RefSeq" id="NP_011515.4">
    <property type="nucleotide sequence ID" value="NM_001181130.3"/>
</dbReference>
<dbReference type="BioGRID" id="33245">
    <property type="interactions" value="79"/>
</dbReference>
<dbReference type="FunCoup" id="P53200">
    <property type="interactions" value="348"/>
</dbReference>
<dbReference type="IntAct" id="P53200">
    <property type="interactions" value="2"/>
</dbReference>
<dbReference type="MINT" id="P53200"/>
<dbReference type="STRING" id="4932.YGR001C"/>
<dbReference type="iPTMnet" id="P53200"/>
<dbReference type="PaxDb" id="4932-YGR001C"/>
<dbReference type="PeptideAtlas" id="P53200"/>
<dbReference type="EnsemblFungi" id="YGR001C_mRNA">
    <property type="protein sequence ID" value="YGR001C"/>
    <property type="gene ID" value="YGR001C"/>
</dbReference>
<dbReference type="GeneID" id="852884"/>
<dbReference type="KEGG" id="sce:YGR001C"/>
<dbReference type="AGR" id="SGD:S000003233"/>
<dbReference type="SGD" id="S000003233">
    <property type="gene designation" value="EFM5"/>
</dbReference>
<dbReference type="VEuPathDB" id="FungiDB:YGR001C"/>
<dbReference type="eggNOG" id="KOG3350">
    <property type="taxonomic scope" value="Eukaryota"/>
</dbReference>
<dbReference type="GeneTree" id="ENSGT00390000016366"/>
<dbReference type="HOGENOM" id="CLU_074410_1_0_1"/>
<dbReference type="InParanoid" id="P53200"/>
<dbReference type="OMA" id="CNFRPEH"/>
<dbReference type="OrthoDB" id="206354at2759"/>
<dbReference type="BioCyc" id="YEAST:G3O-30732-MONOMER"/>
<dbReference type="BRENDA" id="2.1.1.244">
    <property type="organism ID" value="984"/>
</dbReference>
<dbReference type="Reactome" id="R-SCE-8876725">
    <property type="pathway name" value="Protein methylation"/>
</dbReference>
<dbReference type="BioGRID-ORCS" id="852884">
    <property type="hits" value="0 hits in 10 CRISPR screens"/>
</dbReference>
<dbReference type="CD-CODE" id="E03F929F">
    <property type="entry name" value="Stress granule"/>
</dbReference>
<dbReference type="PRO" id="PR:P53200"/>
<dbReference type="Proteomes" id="UP000002311">
    <property type="component" value="Chromosome VII"/>
</dbReference>
<dbReference type="RNAct" id="P53200">
    <property type="molecule type" value="protein"/>
</dbReference>
<dbReference type="GO" id="GO:0005737">
    <property type="term" value="C:cytoplasm"/>
    <property type="evidence" value="ECO:0007005"/>
    <property type="project" value="SGD"/>
</dbReference>
<dbReference type="GO" id="GO:0003676">
    <property type="term" value="F:nucleic acid binding"/>
    <property type="evidence" value="ECO:0007669"/>
    <property type="project" value="InterPro"/>
</dbReference>
<dbReference type="GO" id="GO:0016279">
    <property type="term" value="F:protein-lysine N-methyltransferase activity"/>
    <property type="evidence" value="ECO:0000314"/>
    <property type="project" value="SGD"/>
</dbReference>
<dbReference type="GO" id="GO:0032259">
    <property type="term" value="P:methylation"/>
    <property type="evidence" value="ECO:0007669"/>
    <property type="project" value="UniProtKB-KW"/>
</dbReference>
<dbReference type="HAMAP" id="MF_03187">
    <property type="entry name" value="Methyltr_EFM5"/>
    <property type="match status" value="1"/>
</dbReference>
<dbReference type="InterPro" id="IPR002052">
    <property type="entry name" value="DNA_methylase_N6_adenine_CS"/>
</dbReference>
<dbReference type="InterPro" id="IPR019369">
    <property type="entry name" value="Efm5/EEF1AKMT1"/>
</dbReference>
<dbReference type="InterPro" id="IPR041370">
    <property type="entry name" value="Mlase_EEF1AKMT1/ZCCHC4"/>
</dbReference>
<dbReference type="PANTHER" id="PTHR13200">
    <property type="entry name" value="EEF1A LYSINE METHYLTRANSFERASE 1"/>
    <property type="match status" value="1"/>
</dbReference>
<dbReference type="PANTHER" id="PTHR13200:SF0">
    <property type="entry name" value="EEF1A LYSINE METHYLTRANSFERASE 1"/>
    <property type="match status" value="1"/>
</dbReference>
<dbReference type="Pfam" id="PF10237">
    <property type="entry name" value="N6-adenineMlase"/>
    <property type="match status" value="1"/>
</dbReference>
<comment type="function">
    <text evidence="1 4 5">S-adenosyl-L-methionine-dependent protein-lysine N-methyltransferase that trimethylates elongation factor 1-alpha (TEF1 and TEF2) at 'Lys-79' (PubMed:25446118). Required for replication of Brome mosaic virus (BMV) (PubMed:14671320).</text>
</comment>
<comment type="subcellular location">
    <subcellularLocation>
        <location evidence="1 2">Cytoplasm</location>
    </subcellularLocation>
</comment>
<comment type="miscellaneous">
    <text evidence="3">Present with 3060 molecules/cell in log phase SD medium.</text>
</comment>
<comment type="similarity">
    <text evidence="1 8">Belongs to the class I-like SAM-binding methyltransferase superfamily. EFM5 family.</text>
</comment>
<comment type="caution">
    <text evidence="10">Was originally thought to be an N(6)-adenine-specific DNA methyltransferase based on primary sequence and predicted secondary structure.</text>
</comment>
<comment type="sequence caution" evidence="8">
    <conflict type="erroneous gene model prediction">
        <sequence resource="EMBL-CDS" id="CAA96984"/>
    </conflict>
</comment>
<name>EFM5_YEAST</name>
<gene>
    <name evidence="1 7" type="primary">EFM5</name>
    <name evidence="6" type="synonym">AML1</name>
    <name evidence="12" type="ordered locus">YGR001C</name>
</gene>
<accession>P53200</accession>
<accession>D6VUD8</accession>
<feature type="chain" id="PRO_0000202778" description="Protein-lysine N-methyltransferase EFM5">
    <location>
        <begin position="1"/>
        <end position="248"/>
    </location>
</feature>
<reference key="1">
    <citation type="journal article" date="1997" name="Nature">
        <title>The nucleotide sequence of Saccharomyces cerevisiae chromosome VII.</title>
        <authorList>
            <person name="Tettelin H."/>
            <person name="Agostoni-Carbone M.L."/>
            <person name="Albermann K."/>
            <person name="Albers M."/>
            <person name="Arroyo J."/>
            <person name="Backes U."/>
            <person name="Barreiros T."/>
            <person name="Bertani I."/>
            <person name="Bjourson A.J."/>
            <person name="Brueckner M."/>
            <person name="Bruschi C.V."/>
            <person name="Carignani G."/>
            <person name="Castagnoli L."/>
            <person name="Cerdan E."/>
            <person name="Clemente M.L."/>
            <person name="Coblenz A."/>
            <person name="Coglievina M."/>
            <person name="Coissac E."/>
            <person name="Defoor E."/>
            <person name="Del Bino S."/>
            <person name="Delius H."/>
            <person name="Delneri D."/>
            <person name="de Wergifosse P."/>
            <person name="Dujon B."/>
            <person name="Durand P."/>
            <person name="Entian K.-D."/>
            <person name="Eraso P."/>
            <person name="Escribano V."/>
            <person name="Fabiani L."/>
            <person name="Fartmann B."/>
            <person name="Feroli F."/>
            <person name="Feuermann M."/>
            <person name="Frontali L."/>
            <person name="Garcia-Gonzalez M."/>
            <person name="Garcia-Saez M.I."/>
            <person name="Goffeau A."/>
            <person name="Guerreiro P."/>
            <person name="Hani J."/>
            <person name="Hansen M."/>
            <person name="Hebling U."/>
            <person name="Hernandez K."/>
            <person name="Heumann K."/>
            <person name="Hilger F."/>
            <person name="Hofmann B."/>
            <person name="Indge K.J."/>
            <person name="James C.M."/>
            <person name="Klima R."/>
            <person name="Koetter P."/>
            <person name="Kramer B."/>
            <person name="Kramer W."/>
            <person name="Lauquin G."/>
            <person name="Leuther H."/>
            <person name="Louis E.J."/>
            <person name="Maillier E."/>
            <person name="Marconi A."/>
            <person name="Martegani E."/>
            <person name="Mazon M.J."/>
            <person name="Mazzoni C."/>
            <person name="McReynolds A.D.K."/>
            <person name="Melchioretto P."/>
            <person name="Mewes H.-W."/>
            <person name="Minenkova O."/>
            <person name="Mueller-Auer S."/>
            <person name="Nawrocki A."/>
            <person name="Netter P."/>
            <person name="Neu R."/>
            <person name="Nombela C."/>
            <person name="Oliver S.G."/>
            <person name="Panzeri L."/>
            <person name="Paoluzi S."/>
            <person name="Plevani P."/>
            <person name="Portetelle D."/>
            <person name="Portillo F."/>
            <person name="Potier S."/>
            <person name="Purnelle B."/>
            <person name="Rieger M."/>
            <person name="Riles L."/>
            <person name="Rinaldi T."/>
            <person name="Robben J."/>
            <person name="Rodrigues-Pousada C."/>
            <person name="Rodriguez-Belmonte E."/>
            <person name="Rodriguez-Torres A.M."/>
            <person name="Rose M."/>
            <person name="Ruzzi M."/>
            <person name="Saliola M."/>
            <person name="Sanchez-Perez M."/>
            <person name="Schaefer B."/>
            <person name="Schaefer M."/>
            <person name="Scharfe M."/>
            <person name="Schmidheini T."/>
            <person name="Schreer A."/>
            <person name="Skala J."/>
            <person name="Souciet J.-L."/>
            <person name="Steensma H.Y."/>
            <person name="Talla E."/>
            <person name="Thierry A."/>
            <person name="Vandenbol M."/>
            <person name="van der Aart Q.J.M."/>
            <person name="Van Dyck L."/>
            <person name="Vanoni M."/>
            <person name="Verhasselt P."/>
            <person name="Voet M."/>
            <person name="Volckaert G."/>
            <person name="Wambutt R."/>
            <person name="Watson M.D."/>
            <person name="Weber N."/>
            <person name="Wedler E."/>
            <person name="Wedler H."/>
            <person name="Wipfli P."/>
            <person name="Wolf K."/>
            <person name="Wright L.F."/>
            <person name="Zaccaria P."/>
            <person name="Zimmermann M."/>
            <person name="Zollner A."/>
            <person name="Kleine K."/>
        </authorList>
    </citation>
    <scope>NUCLEOTIDE SEQUENCE [LARGE SCALE GENOMIC DNA]</scope>
    <source>
        <strain>ATCC 204508 / S288c</strain>
    </source>
</reference>
<reference key="2">
    <citation type="journal article" date="2014" name="G3 (Bethesda)">
        <title>The reference genome sequence of Saccharomyces cerevisiae: Then and now.</title>
        <authorList>
            <person name="Engel S.R."/>
            <person name="Dietrich F.S."/>
            <person name="Fisk D.G."/>
            <person name="Binkley G."/>
            <person name="Balakrishnan R."/>
            <person name="Costanzo M.C."/>
            <person name="Dwight S.S."/>
            <person name="Hitz B.C."/>
            <person name="Karra K."/>
            <person name="Nash R.S."/>
            <person name="Weng S."/>
            <person name="Wong E.D."/>
            <person name="Lloyd P."/>
            <person name="Skrzypek M.S."/>
            <person name="Miyasato S.R."/>
            <person name="Simison M."/>
            <person name="Cherry J.M."/>
        </authorList>
    </citation>
    <scope>GENOME REANNOTATION</scope>
    <source>
        <strain>ATCC 204508 / S288c</strain>
    </source>
</reference>
<reference key="3">
    <citation type="journal article" date="2000" name="Nucleic Acids Res.">
        <title>Test of intron predictions reveals novel splice sites, alternatively spliced mRNAs and new introns in meiotically regulated genes of yeast.</title>
        <authorList>
            <person name="Davis C.A."/>
            <person name="Grate L."/>
            <person name="Spingola M."/>
            <person name="Ares M. Jr."/>
        </authorList>
    </citation>
    <scope>REVISION OF GENE MODEL</scope>
</reference>
<reference key="4">
    <citation type="journal article" date="2003" name="Nature">
        <title>Global analysis of protein localization in budding yeast.</title>
        <authorList>
            <person name="Huh W.-K."/>
            <person name="Falvo J.V."/>
            <person name="Gerke L.C."/>
            <person name="Carroll A.S."/>
            <person name="Howson R.W."/>
            <person name="Weissman J.S."/>
            <person name="O'Shea E.K."/>
        </authorList>
    </citation>
    <scope>SUBCELLULAR LOCATION [LARGE SCALE ANALYSIS]</scope>
</reference>
<reference key="5">
    <citation type="journal article" date="2003" name="Nature">
        <title>Global analysis of protein expression in yeast.</title>
        <authorList>
            <person name="Ghaemmaghami S."/>
            <person name="Huh W.-K."/>
            <person name="Bower K."/>
            <person name="Howson R.W."/>
            <person name="Belle A."/>
            <person name="Dephoure N."/>
            <person name="O'Shea E.K."/>
            <person name="Weissman J.S."/>
        </authorList>
    </citation>
    <scope>LEVEL OF PROTEIN EXPRESSION [LARGE SCALE ANALYSIS]</scope>
</reference>
<reference key="6">
    <citation type="journal article" date="2003" name="Proc. Natl. Acad. Sci. U.S.A.">
        <title>Systematic, genome-wide identification of host genes affecting replication of a positive-strand RNA virus.</title>
        <authorList>
            <person name="Kushner D.B."/>
            <person name="Lindenbach B.D."/>
            <person name="Grdzelishvili V.Z."/>
            <person name="Noueiry A.O."/>
            <person name="Paul S.M."/>
            <person name="Ahlquist P."/>
        </authorList>
    </citation>
    <scope>FUNCTION</scope>
</reference>
<reference key="7">
    <citation type="journal article" date="2004" name="FEBS Lett.">
        <title>Novel Sm-like proteins with long C-terminal tails and associated methyltransferases.</title>
        <authorList>
            <person name="Albrecht M."/>
            <person name="Lengauer T."/>
        </authorList>
    </citation>
    <scope>SIMILARITY TO METHYLTRANSFERASES</scope>
</reference>
<reference key="8">
    <citation type="journal article" date="2009" name="Epigenomics">
        <title>Bioinformatic identification of novel methyltransferases.</title>
        <authorList>
            <person name="Petrossian T."/>
            <person name="Clarke S."/>
        </authorList>
    </citation>
    <scope>FUNCTION PREDICTION</scope>
</reference>
<reference key="9">
    <citation type="journal article" date="2011" name="PLoS ONE">
        <title>Comprehensive structural and substrate specificity classification of the Saccharomyces cerevisiae methyltransferome.</title>
        <authorList>
            <person name="Wlodarski T."/>
            <person name="Kutner J."/>
            <person name="Towpik J."/>
            <person name="Knizewski L."/>
            <person name="Rychlewski L."/>
            <person name="Kudlicki A."/>
            <person name="Rowicka M."/>
            <person name="Dziembowski A."/>
            <person name="Ginalski K."/>
        </authorList>
    </citation>
    <scope>GENE NAME</scope>
</reference>
<reference key="10">
    <citation type="journal article" date="2014" name="Biochem. Biophys. Res. Commun.">
        <title>A new type of protein lysine methyltransferase trimethylates Lys-79 of elongation factor 1A.</title>
        <authorList>
            <person name="Dzialo M.C."/>
            <person name="Travaglini K.J."/>
            <person name="Shen S."/>
            <person name="Loo J.A."/>
            <person name="Clarke S.G."/>
        </authorList>
    </citation>
    <scope>FUNCTION</scope>
</reference>